<sequence>MSQNLILILNCGSSSLKFAILDPINGDEKLSGLAESFYLDDARIKWKFNGEKGNADLDAGAAHTEALNFIVSNILTDELKQSIGAIGHRIVHGGEKFTSSVVITDEVVKGIEEVIQFAPLHNPAHLIGIQEAFRIFPELKDRNVAVFDTAFHTTMPEQAYLYALPYSLYKDHGVRRYGAHGTSHYFVSREAARRLNVAEDKVNVITCHLGNGGSVSAIRHGECIDTSMGLTPLEGLVMGTRSGDIDPAIIFYMHDTLGMSVEEINNTLTKKSGLLGLTEVTSDCRYAEDNYETDDAARRAMEVYCYRLAKYIGSYMAVIGERLDAIVFTGGIGENSAHVREITLNHLKLFGYQVDDARNLAARFGNEGVITAEGSPLAMVIATNEELVIAQDTARLTITK</sequence>
<gene>
    <name evidence="1" type="primary">ackA</name>
    <name type="ordered locus">HD_1456</name>
</gene>
<reference key="1">
    <citation type="submission" date="2003-06" db="EMBL/GenBank/DDBJ databases">
        <title>The complete genome sequence of Haemophilus ducreyi.</title>
        <authorList>
            <person name="Munson R.S. Jr."/>
            <person name="Ray W.C."/>
            <person name="Mahairas G."/>
            <person name="Sabo P."/>
            <person name="Mungur R."/>
            <person name="Johnson L."/>
            <person name="Nguyen D."/>
            <person name="Wang J."/>
            <person name="Forst C."/>
            <person name="Hood L."/>
        </authorList>
    </citation>
    <scope>NUCLEOTIDE SEQUENCE [LARGE SCALE GENOMIC DNA]</scope>
    <source>
        <strain>35000HP / ATCC 700724</strain>
    </source>
</reference>
<feature type="chain" id="PRO_0000107564" description="Acetate kinase">
    <location>
        <begin position="1"/>
        <end position="400"/>
    </location>
</feature>
<feature type="active site" description="Proton donor/acceptor" evidence="1">
    <location>
        <position position="148"/>
    </location>
</feature>
<feature type="binding site" evidence="1">
    <location>
        <position position="10"/>
    </location>
    <ligand>
        <name>Mg(2+)</name>
        <dbReference type="ChEBI" id="CHEBI:18420"/>
    </ligand>
</feature>
<feature type="binding site" evidence="1">
    <location>
        <position position="17"/>
    </location>
    <ligand>
        <name>ATP</name>
        <dbReference type="ChEBI" id="CHEBI:30616"/>
    </ligand>
</feature>
<feature type="binding site" evidence="1">
    <location>
        <position position="89"/>
    </location>
    <ligand>
        <name>substrate</name>
    </ligand>
</feature>
<feature type="binding site" evidence="1">
    <location>
        <begin position="208"/>
        <end position="212"/>
    </location>
    <ligand>
        <name>ATP</name>
        <dbReference type="ChEBI" id="CHEBI:30616"/>
    </ligand>
</feature>
<feature type="binding site" evidence="1">
    <location>
        <begin position="283"/>
        <end position="285"/>
    </location>
    <ligand>
        <name>ATP</name>
        <dbReference type="ChEBI" id="CHEBI:30616"/>
    </ligand>
</feature>
<feature type="binding site" evidence="1">
    <location>
        <begin position="331"/>
        <end position="335"/>
    </location>
    <ligand>
        <name>ATP</name>
        <dbReference type="ChEBI" id="CHEBI:30616"/>
    </ligand>
</feature>
<feature type="binding site" evidence="1">
    <location>
        <position position="385"/>
    </location>
    <ligand>
        <name>Mg(2+)</name>
        <dbReference type="ChEBI" id="CHEBI:18420"/>
    </ligand>
</feature>
<feature type="site" description="Transition state stabilizer" evidence="1">
    <location>
        <position position="180"/>
    </location>
</feature>
<feature type="site" description="Transition state stabilizer" evidence="1">
    <location>
        <position position="241"/>
    </location>
</feature>
<proteinExistence type="inferred from homology"/>
<accession>Q7VLI5</accession>
<evidence type="ECO:0000255" key="1">
    <source>
        <dbReference type="HAMAP-Rule" id="MF_00020"/>
    </source>
</evidence>
<dbReference type="EC" id="2.7.2.1" evidence="1"/>
<dbReference type="EMBL" id="AE017143">
    <property type="protein sequence ID" value="AAP96261.1"/>
    <property type="molecule type" value="Genomic_DNA"/>
</dbReference>
<dbReference type="RefSeq" id="WP_010945306.1">
    <property type="nucleotide sequence ID" value="NC_002940.2"/>
</dbReference>
<dbReference type="SMR" id="Q7VLI5"/>
<dbReference type="STRING" id="233412.HD_1456"/>
<dbReference type="KEGG" id="hdu:HD_1456"/>
<dbReference type="eggNOG" id="COG0282">
    <property type="taxonomic scope" value="Bacteria"/>
</dbReference>
<dbReference type="HOGENOM" id="CLU_020352_0_1_6"/>
<dbReference type="OrthoDB" id="9802453at2"/>
<dbReference type="UniPathway" id="UPA00340">
    <property type="reaction ID" value="UER00458"/>
</dbReference>
<dbReference type="Proteomes" id="UP000001022">
    <property type="component" value="Chromosome"/>
</dbReference>
<dbReference type="GO" id="GO:0005829">
    <property type="term" value="C:cytosol"/>
    <property type="evidence" value="ECO:0007669"/>
    <property type="project" value="TreeGrafter"/>
</dbReference>
<dbReference type="GO" id="GO:0008776">
    <property type="term" value="F:acetate kinase activity"/>
    <property type="evidence" value="ECO:0007669"/>
    <property type="project" value="UniProtKB-UniRule"/>
</dbReference>
<dbReference type="GO" id="GO:0005524">
    <property type="term" value="F:ATP binding"/>
    <property type="evidence" value="ECO:0007669"/>
    <property type="project" value="UniProtKB-KW"/>
</dbReference>
<dbReference type="GO" id="GO:0000287">
    <property type="term" value="F:magnesium ion binding"/>
    <property type="evidence" value="ECO:0007669"/>
    <property type="project" value="UniProtKB-UniRule"/>
</dbReference>
<dbReference type="GO" id="GO:0006083">
    <property type="term" value="P:acetate metabolic process"/>
    <property type="evidence" value="ECO:0007669"/>
    <property type="project" value="TreeGrafter"/>
</dbReference>
<dbReference type="GO" id="GO:0006085">
    <property type="term" value="P:acetyl-CoA biosynthetic process"/>
    <property type="evidence" value="ECO:0007669"/>
    <property type="project" value="UniProtKB-UniRule"/>
</dbReference>
<dbReference type="CDD" id="cd24010">
    <property type="entry name" value="ASKHA_NBD_AcK_PK"/>
    <property type="match status" value="1"/>
</dbReference>
<dbReference type="FunFam" id="3.30.420.40:FF:000041">
    <property type="entry name" value="Acetate kinase"/>
    <property type="match status" value="1"/>
</dbReference>
<dbReference type="FunFam" id="3.30.420.40:FF:000042">
    <property type="entry name" value="Acetate kinase"/>
    <property type="match status" value="1"/>
</dbReference>
<dbReference type="Gene3D" id="3.30.420.40">
    <property type="match status" value="2"/>
</dbReference>
<dbReference type="HAMAP" id="MF_00020">
    <property type="entry name" value="Acetate_kinase"/>
    <property type="match status" value="1"/>
</dbReference>
<dbReference type="InterPro" id="IPR004372">
    <property type="entry name" value="Ac/propionate_kinase"/>
</dbReference>
<dbReference type="InterPro" id="IPR000890">
    <property type="entry name" value="Aliphatic_acid_kin_short-chain"/>
</dbReference>
<dbReference type="InterPro" id="IPR023865">
    <property type="entry name" value="Aliphatic_acid_kinase_CS"/>
</dbReference>
<dbReference type="InterPro" id="IPR043129">
    <property type="entry name" value="ATPase_NBD"/>
</dbReference>
<dbReference type="NCBIfam" id="TIGR00016">
    <property type="entry name" value="ackA"/>
    <property type="match status" value="1"/>
</dbReference>
<dbReference type="PANTHER" id="PTHR21060">
    <property type="entry name" value="ACETATE KINASE"/>
    <property type="match status" value="1"/>
</dbReference>
<dbReference type="PANTHER" id="PTHR21060:SF21">
    <property type="entry name" value="ACETATE KINASE"/>
    <property type="match status" value="1"/>
</dbReference>
<dbReference type="Pfam" id="PF00871">
    <property type="entry name" value="Acetate_kinase"/>
    <property type="match status" value="1"/>
</dbReference>
<dbReference type="PIRSF" id="PIRSF000722">
    <property type="entry name" value="Acetate_prop_kin"/>
    <property type="match status" value="1"/>
</dbReference>
<dbReference type="PRINTS" id="PR00471">
    <property type="entry name" value="ACETATEKNASE"/>
</dbReference>
<dbReference type="SUPFAM" id="SSF53067">
    <property type="entry name" value="Actin-like ATPase domain"/>
    <property type="match status" value="2"/>
</dbReference>
<dbReference type="PROSITE" id="PS01075">
    <property type="entry name" value="ACETATE_KINASE_1"/>
    <property type="match status" value="1"/>
</dbReference>
<dbReference type="PROSITE" id="PS01076">
    <property type="entry name" value="ACETATE_KINASE_2"/>
    <property type="match status" value="1"/>
</dbReference>
<keyword id="KW-0067">ATP-binding</keyword>
<keyword id="KW-0963">Cytoplasm</keyword>
<keyword id="KW-0418">Kinase</keyword>
<keyword id="KW-0460">Magnesium</keyword>
<keyword id="KW-0479">Metal-binding</keyword>
<keyword id="KW-0547">Nucleotide-binding</keyword>
<keyword id="KW-1185">Reference proteome</keyword>
<keyword id="KW-0808">Transferase</keyword>
<protein>
    <recommendedName>
        <fullName evidence="1">Acetate kinase</fullName>
        <ecNumber evidence="1">2.7.2.1</ecNumber>
    </recommendedName>
    <alternativeName>
        <fullName evidence="1">Acetokinase</fullName>
    </alternativeName>
</protein>
<organism>
    <name type="scientific">Haemophilus ducreyi (strain 35000HP / ATCC 700724)</name>
    <dbReference type="NCBI Taxonomy" id="233412"/>
    <lineage>
        <taxon>Bacteria</taxon>
        <taxon>Pseudomonadati</taxon>
        <taxon>Pseudomonadota</taxon>
        <taxon>Gammaproteobacteria</taxon>
        <taxon>Pasteurellales</taxon>
        <taxon>Pasteurellaceae</taxon>
        <taxon>Haemophilus</taxon>
    </lineage>
</organism>
<name>ACKA_HAEDU</name>
<comment type="function">
    <text evidence="1">Catalyzes the formation of acetyl phosphate from acetate and ATP. Can also catalyze the reverse reaction.</text>
</comment>
<comment type="catalytic activity">
    <reaction evidence="1">
        <text>acetate + ATP = acetyl phosphate + ADP</text>
        <dbReference type="Rhea" id="RHEA:11352"/>
        <dbReference type="ChEBI" id="CHEBI:22191"/>
        <dbReference type="ChEBI" id="CHEBI:30089"/>
        <dbReference type="ChEBI" id="CHEBI:30616"/>
        <dbReference type="ChEBI" id="CHEBI:456216"/>
        <dbReference type="EC" id="2.7.2.1"/>
    </reaction>
</comment>
<comment type="cofactor">
    <cofactor evidence="1">
        <name>Mg(2+)</name>
        <dbReference type="ChEBI" id="CHEBI:18420"/>
    </cofactor>
    <cofactor evidence="1">
        <name>Mn(2+)</name>
        <dbReference type="ChEBI" id="CHEBI:29035"/>
    </cofactor>
    <text evidence="1">Mg(2+). Can also accept Mn(2+).</text>
</comment>
<comment type="pathway">
    <text evidence="1">Metabolic intermediate biosynthesis; acetyl-CoA biosynthesis; acetyl-CoA from acetate: step 1/2.</text>
</comment>
<comment type="subunit">
    <text evidence="1">Homodimer.</text>
</comment>
<comment type="subcellular location">
    <subcellularLocation>
        <location evidence="1">Cytoplasm</location>
    </subcellularLocation>
</comment>
<comment type="similarity">
    <text evidence="1">Belongs to the acetokinase family.</text>
</comment>